<feature type="signal peptide" evidence="2">
    <location>
        <begin position="1"/>
        <end position="27"/>
    </location>
</feature>
<feature type="chain" id="PRO_0000379628" description="Defensin-like protein 46">
    <location>
        <begin position="28"/>
        <end position="80"/>
    </location>
</feature>
<feature type="disulfide bond" evidence="1">
    <location>
        <begin position="40"/>
        <end position="78"/>
    </location>
</feature>
<feature type="disulfide bond" evidence="1">
    <location>
        <begin position="44"/>
        <end position="65"/>
    </location>
</feature>
<feature type="disulfide bond" evidence="1">
    <location>
        <begin position="50"/>
        <end position="76"/>
    </location>
</feature>
<feature type="disulfide bond" evidence="1">
    <location>
        <begin position="54"/>
        <end position="77"/>
    </location>
</feature>
<reference key="1">
    <citation type="journal article" date="2000" name="DNA Res.">
        <title>Structural analysis of Arabidopsis thaliana chromosome 3. I. Sequence features of the regions of 4,504,864 bp covered by sixty P1 and TAC clones.</title>
        <authorList>
            <person name="Sato S."/>
            <person name="Nakamura Y."/>
            <person name="Kaneko T."/>
            <person name="Katoh T."/>
            <person name="Asamizu E."/>
            <person name="Tabata S."/>
        </authorList>
    </citation>
    <scope>NUCLEOTIDE SEQUENCE [LARGE SCALE GENOMIC DNA]</scope>
    <source>
        <strain>cv. Columbia</strain>
    </source>
</reference>
<reference key="2">
    <citation type="journal article" date="2017" name="Plant J.">
        <title>Araport11: a complete reannotation of the Arabidopsis thaliana reference genome.</title>
        <authorList>
            <person name="Cheng C.Y."/>
            <person name="Krishnakumar V."/>
            <person name="Chan A.P."/>
            <person name="Thibaud-Nissen F."/>
            <person name="Schobel S."/>
            <person name="Town C.D."/>
        </authorList>
    </citation>
    <scope>GENOME REANNOTATION</scope>
    <source>
        <strain>cv. Columbia</strain>
    </source>
</reference>
<reference key="3">
    <citation type="journal article" date="2006" name="Plant Biotechnol. J.">
        <title>Simultaneous high-throughput recombinational cloning of open reading frames in closed and open configurations.</title>
        <authorList>
            <person name="Underwood B.A."/>
            <person name="Vanderhaeghen R."/>
            <person name="Whitford R."/>
            <person name="Town C.D."/>
            <person name="Hilson P."/>
        </authorList>
    </citation>
    <scope>NUCLEOTIDE SEQUENCE [LARGE SCALE MRNA]</scope>
    <source>
        <strain>cv. Columbia</strain>
    </source>
</reference>
<reference key="4">
    <citation type="journal article" date="2005" name="Plant Physiol.">
        <title>Genome organization of more than 300 defensin-like genes in Arabidopsis.</title>
        <authorList>
            <person name="Silverstein K.A.T."/>
            <person name="Graham M.A."/>
            <person name="Paape T.D."/>
            <person name="VandenBosch K.A."/>
        </authorList>
    </citation>
    <scope>GENE FAMILY</scope>
</reference>
<accession>Q2V3V1</accession>
<accession>A0ME04</accession>
<name>DEF46_ARATH</name>
<keyword id="KW-0929">Antimicrobial</keyword>
<keyword id="KW-1015">Disulfide bond</keyword>
<keyword id="KW-0295">Fungicide</keyword>
<keyword id="KW-0611">Plant defense</keyword>
<keyword id="KW-1185">Reference proteome</keyword>
<keyword id="KW-0964">Secreted</keyword>
<keyword id="KW-0732">Signal</keyword>
<dbReference type="EMBL" id="AB026636">
    <property type="status" value="NOT_ANNOTATED_CDS"/>
    <property type="molecule type" value="Genomic_DNA"/>
</dbReference>
<dbReference type="EMBL" id="CP002686">
    <property type="protein sequence ID" value="AEE75912.1"/>
    <property type="molecule type" value="Genomic_DNA"/>
</dbReference>
<dbReference type="EMBL" id="DQ492221">
    <property type="protein sequence ID" value="ABF59150.1"/>
    <property type="molecule type" value="mRNA"/>
</dbReference>
<dbReference type="EMBL" id="DQ652770">
    <property type="protein sequence ID" value="ABK28364.1"/>
    <property type="status" value="ALT_SEQ"/>
    <property type="molecule type" value="mRNA"/>
</dbReference>
<dbReference type="RefSeq" id="NP_001030715.1">
    <property type="nucleotide sequence ID" value="NM_001035638.3"/>
</dbReference>
<dbReference type="SMR" id="Q2V3V1"/>
<dbReference type="STRING" id="3702.Q2V3V1"/>
<dbReference type="PaxDb" id="3702-AT3G17155.1"/>
<dbReference type="ProteomicsDB" id="224245"/>
<dbReference type="EnsemblPlants" id="AT3G17155.1">
    <property type="protein sequence ID" value="AT3G17155.1"/>
    <property type="gene ID" value="AT3G17155"/>
</dbReference>
<dbReference type="GeneID" id="3768820"/>
<dbReference type="Gramene" id="AT3G17155.1">
    <property type="protein sequence ID" value="AT3G17155.1"/>
    <property type="gene ID" value="AT3G17155"/>
</dbReference>
<dbReference type="KEGG" id="ath:AT3G17155"/>
<dbReference type="Araport" id="AT3G17155"/>
<dbReference type="TAIR" id="AT3G17155"/>
<dbReference type="HOGENOM" id="CLU_165205_1_0_1"/>
<dbReference type="InParanoid" id="Q2V3V1"/>
<dbReference type="OMA" id="ECMNYCI"/>
<dbReference type="OrthoDB" id="1020793at2759"/>
<dbReference type="PhylomeDB" id="Q2V3V1"/>
<dbReference type="PRO" id="PR:Q2V3V1"/>
<dbReference type="Proteomes" id="UP000006548">
    <property type="component" value="Chromosome 3"/>
</dbReference>
<dbReference type="ExpressionAtlas" id="Q2V3V1">
    <property type="expression patterns" value="baseline"/>
</dbReference>
<dbReference type="GO" id="GO:0005576">
    <property type="term" value="C:extracellular region"/>
    <property type="evidence" value="ECO:0007669"/>
    <property type="project" value="UniProtKB-SubCell"/>
</dbReference>
<dbReference type="GO" id="GO:0050832">
    <property type="term" value="P:defense response to fungus"/>
    <property type="evidence" value="ECO:0007669"/>
    <property type="project" value="UniProtKB-KW"/>
</dbReference>
<dbReference type="GO" id="GO:0031640">
    <property type="term" value="P:killing of cells of another organism"/>
    <property type="evidence" value="ECO:0007669"/>
    <property type="project" value="UniProtKB-KW"/>
</dbReference>
<protein>
    <recommendedName>
        <fullName>Defensin-like protein 46</fullName>
    </recommendedName>
</protein>
<evidence type="ECO:0000250" key="1"/>
<evidence type="ECO:0000255" key="2"/>
<evidence type="ECO:0000305" key="3"/>
<proteinExistence type="inferred from homology"/>
<comment type="subcellular location">
    <subcellularLocation>
        <location evidence="1">Secreted</location>
    </subcellularLocation>
</comment>
<comment type="similarity">
    <text evidence="3">Belongs to the DEFL family.</text>
</comment>
<comment type="sequence caution" evidence="3">
    <conflict type="erroneous termination">
        <sequence resource="EMBL-CDS" id="ABK28364"/>
    </conflict>
    <text>Extended C-terminus.</text>
</comment>
<organism>
    <name type="scientific">Arabidopsis thaliana</name>
    <name type="common">Mouse-ear cress</name>
    <dbReference type="NCBI Taxonomy" id="3702"/>
    <lineage>
        <taxon>Eukaryota</taxon>
        <taxon>Viridiplantae</taxon>
        <taxon>Streptophyta</taxon>
        <taxon>Embryophyta</taxon>
        <taxon>Tracheophyta</taxon>
        <taxon>Spermatophyta</taxon>
        <taxon>Magnoliopsida</taxon>
        <taxon>eudicotyledons</taxon>
        <taxon>Gunneridae</taxon>
        <taxon>Pentapetalae</taxon>
        <taxon>rosids</taxon>
        <taxon>malvids</taxon>
        <taxon>Brassicales</taxon>
        <taxon>Brassicaceae</taxon>
        <taxon>Camelineae</taxon>
        <taxon>Arabidopsis</taxon>
    </lineage>
</organism>
<sequence length="80" mass="8591">MGSTKTLVTCFLTIILAVSLSNHNVLAIDAGIKGFDTDHCDTRCYGRDECMNYCIKAGFPKGGQCGSLCIPCGFKCCCQK</sequence>
<gene>
    <name type="ordered locus">At3g17155</name>
    <name type="ORF">K14A17</name>
</gene>